<gene>
    <name evidence="1" type="primary">yejL</name>
    <name type="ordered locus">STM2227</name>
</gene>
<feature type="chain" id="PRO_0000201798" description="UPF0352 protein YejL">
    <location>
        <begin position="1"/>
        <end position="75"/>
    </location>
</feature>
<accession>Q7CQ70</accession>
<name>YEJL_SALTY</name>
<evidence type="ECO:0000255" key="1">
    <source>
        <dbReference type="HAMAP-Rule" id="MF_00816"/>
    </source>
</evidence>
<proteinExistence type="inferred from homology"/>
<reference key="1">
    <citation type="journal article" date="2001" name="Nature">
        <title>Complete genome sequence of Salmonella enterica serovar Typhimurium LT2.</title>
        <authorList>
            <person name="McClelland M."/>
            <person name="Sanderson K.E."/>
            <person name="Spieth J."/>
            <person name="Clifton S.W."/>
            <person name="Latreille P."/>
            <person name="Courtney L."/>
            <person name="Porwollik S."/>
            <person name="Ali J."/>
            <person name="Dante M."/>
            <person name="Du F."/>
            <person name="Hou S."/>
            <person name="Layman D."/>
            <person name="Leonard S."/>
            <person name="Nguyen C."/>
            <person name="Scott K."/>
            <person name="Holmes A."/>
            <person name="Grewal N."/>
            <person name="Mulvaney E."/>
            <person name="Ryan E."/>
            <person name="Sun H."/>
            <person name="Florea L."/>
            <person name="Miller W."/>
            <person name="Stoneking T."/>
            <person name="Nhan M."/>
            <person name="Waterston R."/>
            <person name="Wilson R.K."/>
        </authorList>
    </citation>
    <scope>NUCLEOTIDE SEQUENCE [LARGE SCALE GENOMIC DNA]</scope>
    <source>
        <strain>LT2 / SGSC1412 / ATCC 700720</strain>
    </source>
</reference>
<protein>
    <recommendedName>
        <fullName evidence="1">UPF0352 protein YejL</fullName>
    </recommendedName>
</protein>
<dbReference type="EMBL" id="AE006468">
    <property type="protein sequence ID" value="AAL21130.1"/>
    <property type="molecule type" value="Genomic_DNA"/>
</dbReference>
<dbReference type="RefSeq" id="NP_461171.1">
    <property type="nucleotide sequence ID" value="NC_003197.2"/>
</dbReference>
<dbReference type="RefSeq" id="WP_001135904.1">
    <property type="nucleotide sequence ID" value="NC_003197.2"/>
</dbReference>
<dbReference type="SMR" id="Q7CQ70"/>
<dbReference type="STRING" id="99287.STM2227"/>
<dbReference type="PaxDb" id="99287-STM2227"/>
<dbReference type="GeneID" id="1253749"/>
<dbReference type="KEGG" id="stm:STM2227"/>
<dbReference type="PATRIC" id="fig|99287.12.peg.2359"/>
<dbReference type="HOGENOM" id="CLU_175457_0_0_6"/>
<dbReference type="OMA" id="HQAPTDL"/>
<dbReference type="PhylomeDB" id="Q7CQ70"/>
<dbReference type="BioCyc" id="SENT99287:STM2227-MONOMER"/>
<dbReference type="Proteomes" id="UP000001014">
    <property type="component" value="Chromosome"/>
</dbReference>
<dbReference type="Gene3D" id="1.10.3390.10">
    <property type="entry name" value="YejL-like"/>
    <property type="match status" value="1"/>
</dbReference>
<dbReference type="HAMAP" id="MF_00816">
    <property type="entry name" value="UPF0352"/>
    <property type="match status" value="1"/>
</dbReference>
<dbReference type="InterPro" id="IPR009857">
    <property type="entry name" value="UPF0352"/>
</dbReference>
<dbReference type="InterPro" id="IPR023202">
    <property type="entry name" value="YejL_sf"/>
</dbReference>
<dbReference type="NCBIfam" id="NF010242">
    <property type="entry name" value="PRK13689.1"/>
    <property type="match status" value="1"/>
</dbReference>
<dbReference type="Pfam" id="PF07208">
    <property type="entry name" value="DUF1414"/>
    <property type="match status" value="1"/>
</dbReference>
<dbReference type="PIRSF" id="PIRSF006188">
    <property type="entry name" value="UCP006188"/>
    <property type="match status" value="1"/>
</dbReference>
<dbReference type="SUPFAM" id="SSF158651">
    <property type="entry name" value="YejL-like"/>
    <property type="match status" value="1"/>
</dbReference>
<keyword id="KW-1185">Reference proteome</keyword>
<sequence>MPQLSRYSDEHVEQLLSELLSVLEKHKAPTDLSLMVLGNMVTNLINTSVAPAQRQAIANSFARALQSSISEDNAH</sequence>
<comment type="similarity">
    <text evidence="1">Belongs to the UPF0352 family.</text>
</comment>
<organism>
    <name type="scientific">Salmonella typhimurium (strain LT2 / SGSC1412 / ATCC 700720)</name>
    <dbReference type="NCBI Taxonomy" id="99287"/>
    <lineage>
        <taxon>Bacteria</taxon>
        <taxon>Pseudomonadati</taxon>
        <taxon>Pseudomonadota</taxon>
        <taxon>Gammaproteobacteria</taxon>
        <taxon>Enterobacterales</taxon>
        <taxon>Enterobacteriaceae</taxon>
        <taxon>Salmonella</taxon>
    </lineage>
</organism>